<accession>Q12S61</accession>
<dbReference type="EC" id="5.6.1.7" evidence="1"/>
<dbReference type="EMBL" id="CP000302">
    <property type="protein sequence ID" value="ABE53715.1"/>
    <property type="molecule type" value="Genomic_DNA"/>
</dbReference>
<dbReference type="RefSeq" id="WP_011494881.1">
    <property type="nucleotide sequence ID" value="NC_007954.1"/>
</dbReference>
<dbReference type="SMR" id="Q12S61"/>
<dbReference type="STRING" id="318161.Sden_0422"/>
<dbReference type="KEGG" id="sdn:Sden_0422"/>
<dbReference type="eggNOG" id="COG0459">
    <property type="taxonomic scope" value="Bacteria"/>
</dbReference>
<dbReference type="HOGENOM" id="CLU_016503_3_0_6"/>
<dbReference type="OrthoDB" id="9766614at2"/>
<dbReference type="Proteomes" id="UP000001982">
    <property type="component" value="Chromosome"/>
</dbReference>
<dbReference type="GO" id="GO:0005737">
    <property type="term" value="C:cytoplasm"/>
    <property type="evidence" value="ECO:0007669"/>
    <property type="project" value="UniProtKB-SubCell"/>
</dbReference>
<dbReference type="GO" id="GO:0005524">
    <property type="term" value="F:ATP binding"/>
    <property type="evidence" value="ECO:0007669"/>
    <property type="project" value="UniProtKB-UniRule"/>
</dbReference>
<dbReference type="GO" id="GO:0140662">
    <property type="term" value="F:ATP-dependent protein folding chaperone"/>
    <property type="evidence" value="ECO:0007669"/>
    <property type="project" value="InterPro"/>
</dbReference>
<dbReference type="GO" id="GO:0016853">
    <property type="term" value="F:isomerase activity"/>
    <property type="evidence" value="ECO:0007669"/>
    <property type="project" value="UniProtKB-KW"/>
</dbReference>
<dbReference type="GO" id="GO:0051082">
    <property type="term" value="F:unfolded protein binding"/>
    <property type="evidence" value="ECO:0007669"/>
    <property type="project" value="UniProtKB-UniRule"/>
</dbReference>
<dbReference type="GO" id="GO:0042026">
    <property type="term" value="P:protein refolding"/>
    <property type="evidence" value="ECO:0007669"/>
    <property type="project" value="UniProtKB-UniRule"/>
</dbReference>
<dbReference type="CDD" id="cd03344">
    <property type="entry name" value="GroEL"/>
    <property type="match status" value="1"/>
</dbReference>
<dbReference type="FunFam" id="1.10.560.10:FF:000001">
    <property type="entry name" value="60 kDa chaperonin"/>
    <property type="match status" value="1"/>
</dbReference>
<dbReference type="FunFam" id="3.50.7.10:FF:000001">
    <property type="entry name" value="60 kDa chaperonin"/>
    <property type="match status" value="1"/>
</dbReference>
<dbReference type="Gene3D" id="3.50.7.10">
    <property type="entry name" value="GroEL"/>
    <property type="match status" value="1"/>
</dbReference>
<dbReference type="Gene3D" id="1.10.560.10">
    <property type="entry name" value="GroEL-like equatorial domain"/>
    <property type="match status" value="1"/>
</dbReference>
<dbReference type="Gene3D" id="3.30.260.10">
    <property type="entry name" value="TCP-1-like chaperonin intermediate domain"/>
    <property type="match status" value="1"/>
</dbReference>
<dbReference type="HAMAP" id="MF_00600">
    <property type="entry name" value="CH60"/>
    <property type="match status" value="1"/>
</dbReference>
<dbReference type="InterPro" id="IPR018370">
    <property type="entry name" value="Chaperonin_Cpn60_CS"/>
</dbReference>
<dbReference type="InterPro" id="IPR001844">
    <property type="entry name" value="Cpn60/GroEL"/>
</dbReference>
<dbReference type="InterPro" id="IPR002423">
    <property type="entry name" value="Cpn60/GroEL/TCP-1"/>
</dbReference>
<dbReference type="InterPro" id="IPR027409">
    <property type="entry name" value="GroEL-like_apical_dom_sf"/>
</dbReference>
<dbReference type="InterPro" id="IPR027413">
    <property type="entry name" value="GROEL-like_equatorial_sf"/>
</dbReference>
<dbReference type="InterPro" id="IPR027410">
    <property type="entry name" value="TCP-1-like_intermed_sf"/>
</dbReference>
<dbReference type="NCBIfam" id="TIGR02348">
    <property type="entry name" value="GroEL"/>
    <property type="match status" value="1"/>
</dbReference>
<dbReference type="NCBIfam" id="NF000592">
    <property type="entry name" value="PRK00013.1"/>
    <property type="match status" value="1"/>
</dbReference>
<dbReference type="NCBIfam" id="NF009487">
    <property type="entry name" value="PRK12849.1"/>
    <property type="match status" value="1"/>
</dbReference>
<dbReference type="NCBIfam" id="NF009488">
    <property type="entry name" value="PRK12850.1"/>
    <property type="match status" value="1"/>
</dbReference>
<dbReference type="NCBIfam" id="NF009489">
    <property type="entry name" value="PRK12851.1"/>
    <property type="match status" value="1"/>
</dbReference>
<dbReference type="PANTHER" id="PTHR45633">
    <property type="entry name" value="60 KDA HEAT SHOCK PROTEIN, MITOCHONDRIAL"/>
    <property type="match status" value="1"/>
</dbReference>
<dbReference type="Pfam" id="PF00118">
    <property type="entry name" value="Cpn60_TCP1"/>
    <property type="match status" value="1"/>
</dbReference>
<dbReference type="PRINTS" id="PR00298">
    <property type="entry name" value="CHAPERONIN60"/>
</dbReference>
<dbReference type="SUPFAM" id="SSF52029">
    <property type="entry name" value="GroEL apical domain-like"/>
    <property type="match status" value="1"/>
</dbReference>
<dbReference type="SUPFAM" id="SSF48592">
    <property type="entry name" value="GroEL equatorial domain-like"/>
    <property type="match status" value="1"/>
</dbReference>
<dbReference type="SUPFAM" id="SSF54849">
    <property type="entry name" value="GroEL-intermediate domain like"/>
    <property type="match status" value="1"/>
</dbReference>
<dbReference type="PROSITE" id="PS00296">
    <property type="entry name" value="CHAPERONINS_CPN60"/>
    <property type="match status" value="1"/>
</dbReference>
<organism>
    <name type="scientific">Shewanella denitrificans (strain OS217 / ATCC BAA-1090 / DSM 15013)</name>
    <dbReference type="NCBI Taxonomy" id="318161"/>
    <lineage>
        <taxon>Bacteria</taxon>
        <taxon>Pseudomonadati</taxon>
        <taxon>Pseudomonadota</taxon>
        <taxon>Gammaproteobacteria</taxon>
        <taxon>Alteromonadales</taxon>
        <taxon>Shewanellaceae</taxon>
        <taxon>Shewanella</taxon>
    </lineage>
</organism>
<protein>
    <recommendedName>
        <fullName evidence="1">Chaperonin GroEL</fullName>
        <ecNumber evidence="1">5.6.1.7</ecNumber>
    </recommendedName>
    <alternativeName>
        <fullName evidence="1">60 kDa chaperonin</fullName>
    </alternativeName>
    <alternativeName>
        <fullName evidence="1">Chaperonin-60</fullName>
        <shortName evidence="1">Cpn60</shortName>
    </alternativeName>
</protein>
<comment type="function">
    <text evidence="1">Together with its co-chaperonin GroES, plays an essential role in assisting protein folding. The GroEL-GroES system forms a nano-cage that allows encapsulation of the non-native substrate proteins and provides a physical environment optimized to promote and accelerate protein folding.</text>
</comment>
<comment type="catalytic activity">
    <reaction evidence="1">
        <text>ATP + H2O + a folded polypeptide = ADP + phosphate + an unfolded polypeptide.</text>
        <dbReference type="EC" id="5.6.1.7"/>
    </reaction>
</comment>
<comment type="subunit">
    <text evidence="1">Forms a cylinder of 14 subunits composed of two heptameric rings stacked back-to-back. Interacts with the co-chaperonin GroES.</text>
</comment>
<comment type="subcellular location">
    <subcellularLocation>
        <location evidence="1">Cytoplasm</location>
    </subcellularLocation>
</comment>
<comment type="similarity">
    <text evidence="1">Belongs to the chaperonin (HSP60) family.</text>
</comment>
<evidence type="ECO:0000255" key="1">
    <source>
        <dbReference type="HAMAP-Rule" id="MF_00600"/>
    </source>
</evidence>
<feature type="chain" id="PRO_0000332076" description="Chaperonin GroEL">
    <location>
        <begin position="1"/>
        <end position="545"/>
    </location>
</feature>
<feature type="binding site" evidence="1">
    <location>
        <begin position="30"/>
        <end position="33"/>
    </location>
    <ligand>
        <name>ATP</name>
        <dbReference type="ChEBI" id="CHEBI:30616"/>
    </ligand>
</feature>
<feature type="binding site" evidence="1">
    <location>
        <position position="51"/>
    </location>
    <ligand>
        <name>ATP</name>
        <dbReference type="ChEBI" id="CHEBI:30616"/>
    </ligand>
</feature>
<feature type="binding site" evidence="1">
    <location>
        <begin position="87"/>
        <end position="91"/>
    </location>
    <ligand>
        <name>ATP</name>
        <dbReference type="ChEBI" id="CHEBI:30616"/>
    </ligand>
</feature>
<feature type="binding site" evidence="1">
    <location>
        <position position="415"/>
    </location>
    <ligand>
        <name>ATP</name>
        <dbReference type="ChEBI" id="CHEBI:30616"/>
    </ligand>
</feature>
<feature type="binding site" evidence="1">
    <location>
        <position position="495"/>
    </location>
    <ligand>
        <name>ATP</name>
        <dbReference type="ChEBI" id="CHEBI:30616"/>
    </ligand>
</feature>
<reference key="1">
    <citation type="submission" date="2006-03" db="EMBL/GenBank/DDBJ databases">
        <title>Complete sequence of Shewanella denitrificans OS217.</title>
        <authorList>
            <consortium name="US DOE Joint Genome Institute"/>
            <person name="Copeland A."/>
            <person name="Lucas S."/>
            <person name="Lapidus A."/>
            <person name="Barry K."/>
            <person name="Detter J.C."/>
            <person name="Glavina del Rio T."/>
            <person name="Hammon N."/>
            <person name="Israni S."/>
            <person name="Dalin E."/>
            <person name="Tice H."/>
            <person name="Pitluck S."/>
            <person name="Brettin T."/>
            <person name="Bruce D."/>
            <person name="Han C."/>
            <person name="Tapia R."/>
            <person name="Gilna P."/>
            <person name="Kiss H."/>
            <person name="Schmutz J."/>
            <person name="Larimer F."/>
            <person name="Land M."/>
            <person name="Hauser L."/>
            <person name="Kyrpides N."/>
            <person name="Lykidis A."/>
            <person name="Richardson P."/>
        </authorList>
    </citation>
    <scope>NUCLEOTIDE SEQUENCE [LARGE SCALE GENOMIC DNA]</scope>
    <source>
        <strain>OS217 / ATCC BAA-1090 / DSM 15013</strain>
    </source>
</reference>
<proteinExistence type="inferred from homology"/>
<keyword id="KW-0067">ATP-binding</keyword>
<keyword id="KW-0143">Chaperone</keyword>
<keyword id="KW-0963">Cytoplasm</keyword>
<keyword id="KW-0413">Isomerase</keyword>
<keyword id="KW-0547">Nucleotide-binding</keyword>
<keyword id="KW-1185">Reference proteome</keyword>
<gene>
    <name evidence="1" type="primary">groEL</name>
    <name evidence="1" type="synonym">groL</name>
    <name type="ordered locus">Sden_0422</name>
</gene>
<name>CH60_SHEDO</name>
<sequence>MAAKEVKFGNDARVKMLAGVNILANAVKVTLGPKGRNVVLDKSFGSPVITKDGVSVAREIELEDKFENMGAQMVKEVASKANDAAGDGTTTATVLAQSIVVEGLKAVAAGMNPMDLKRGIDKAVIAAVAELKKLSQECSDTKAIAQVGTISANSDESIGEIIATAMEKVGKEGVITVEEGQALENELEVVEGMQFDRGYLSPYFINKPETGSIELDSPFILLVDKKISNIRELLPILEGLAKTGKPLLIVAEDVEGEALATLVVNNMRGIVKVAAVKAPGFGDRRKAMLQDVAILTGGTVIAEEIGLELEKATLEDLGTAKRVVITKDNTTIIDGSGEHTQITSRVAQIKQQMEDSSSDYDKEKLQERMAKLAGGVAVIKVGAATEVEMKEKKARVEDALHATRAAVEEGVVPGGGVALVRVASMIADIEVLNEDQKHGVVIALRAMEAPLRQIATNAGQEASVVANTVKNGTGNYGYNAGNDTYGDMLEMGILDPTKVTRSALQFAASIAGLMITTEAMIAEIPQESAPDMGGMGGMGGMGGMM</sequence>